<reference key="1">
    <citation type="journal article" date="1993" name="J. Biol. Chem.">
        <title>Molecular cloning and sequence of a novel ommochrome-binding protein cDNA from an insect, Manduca sexta.</title>
        <authorList>
            <person name="Yepiz-Plascencia G.M."/>
            <person name="Ho C."/>
            <person name="Martel R.R."/>
            <person name="Law J.H."/>
        </authorList>
    </citation>
    <scope>NUCLEOTIDE SEQUENCE [MRNA]</scope>
    <source>
        <tissue>Hemolymph</tissue>
    </source>
</reference>
<reference key="2">
    <citation type="journal article" date="1991" name="J. Biol. Chem.">
        <title>Purification and properties of an ommochrome-binding protein from the hemolymph of the tobacco hornworm, Manduca sexta.</title>
        <authorList>
            <person name="Martel R.R."/>
            <person name="Law J.H."/>
        </authorList>
    </citation>
    <scope>CHARACTERIZATION</scope>
    <scope>PROTEIN SEQUENCE OF 19-49</scope>
    <source>
        <tissue>Hemolymph</tissue>
    </source>
</reference>
<name>OMBP_MANSE</name>
<keyword id="KW-0903">Direct protein sequencing</keyword>
<keyword id="KW-0325">Glycoprotein</keyword>
<keyword id="KW-0732">Signal</keyword>
<comment type="function">
    <text>Binds to an ommochrome, ommatin D which is a yellow chromophore. May be involved in guiding the chromophore through the hemolymph from the epidermis to the gut.</text>
</comment>
<comment type="subunit">
    <text>Monomer.</text>
</comment>
<comment type="tissue specificity">
    <text>Present in larval hemolymph and synthesized by the fat body.</text>
</comment>
<comment type="developmental stage">
    <text>Early larval stages produce only traces of obp, but its synthesis increases dramatically during the fifth larval instar, then it decreases but persists in hemolymph of adults.</text>
</comment>
<proteinExistence type="evidence at protein level"/>
<sequence>MKLLILTICALHVNQMMALKDCVVVNGKNYGKEVLKDNIHQAYQLSFDPQQNTLFFSYSDEVDSKTVLKMGYLNLATKSFGEISGVKDGMATAVDTTNHIVYLGGKDGIYTYDYATKSAKNIGVTSLSIWQMFYCPIHGLFFTTSDEKPYVFKDGQVNQIVEASSSKTRVMAVGEHHDVFFANSSGIFLFNHHTNKVIDLGDYNVNAFTKDSKGKLYFSSPVGFYAVNEADRKMNKLISETGEDSIWGAAFDKDDNIVYSNEDNIVKLVPKDKC</sequence>
<protein>
    <recommendedName>
        <fullName>Ommochrome-binding protein</fullName>
        <shortName>OBP</shortName>
    </recommendedName>
    <alternativeName>
        <fullName>YCP</fullName>
    </alternativeName>
</protein>
<evidence type="ECO:0000269" key="1">
    <source>
    </source>
</evidence>
<evidence type="ECO:0000305" key="2"/>
<feature type="signal peptide" evidence="1">
    <location>
        <begin position="1"/>
        <end position="18"/>
    </location>
</feature>
<feature type="chain" id="PRO_0000021887" description="Ommochrome-binding protein">
    <location>
        <begin position="19"/>
        <end position="274"/>
    </location>
</feature>
<feature type="glycosylation site" description="N-linked (GlcNAc...) asparagine" evidence="2">
    <location>
        <position position="183"/>
    </location>
</feature>
<feature type="sequence conflict" description="In Ref. 2; AA sequence." evidence="2" ref="2">
    <original>L</original>
    <variation>S</variation>
    <location>
        <position position="19"/>
    </location>
</feature>
<feature type="sequence conflict" description="In Ref. 2; AA sequence." evidence="2" ref="2">
    <original>C</original>
    <variation>S</variation>
    <location>
        <position position="22"/>
    </location>
</feature>
<feature type="sequence conflict" description="In Ref. 2; AA sequence." evidence="2" ref="2">
    <original>V</original>
    <variation>S</variation>
    <location>
        <position position="24"/>
    </location>
</feature>
<feature type="sequence conflict" description="In Ref. 2; AA sequence." evidence="2" ref="2">
    <original>V</original>
    <variation>T</variation>
    <location>
        <position position="24"/>
    </location>
</feature>
<feature type="sequence conflict" description="In Ref. 2; AA sequence." evidence="2" ref="2">
    <original>P</original>
    <variation>E</variation>
    <location>
        <position position="49"/>
    </location>
</feature>
<organism>
    <name type="scientific">Manduca sexta</name>
    <name type="common">Tobacco hawkmoth</name>
    <name type="synonym">Tobacco hornworm</name>
    <dbReference type="NCBI Taxonomy" id="7130"/>
    <lineage>
        <taxon>Eukaryota</taxon>
        <taxon>Metazoa</taxon>
        <taxon>Ecdysozoa</taxon>
        <taxon>Arthropoda</taxon>
        <taxon>Hexapoda</taxon>
        <taxon>Insecta</taxon>
        <taxon>Pterygota</taxon>
        <taxon>Neoptera</taxon>
        <taxon>Endopterygota</taxon>
        <taxon>Lepidoptera</taxon>
        <taxon>Glossata</taxon>
        <taxon>Ditrysia</taxon>
        <taxon>Bombycoidea</taxon>
        <taxon>Sphingidae</taxon>
        <taxon>Sphinginae</taxon>
        <taxon>Sphingini</taxon>
        <taxon>Manduca</taxon>
    </lineage>
</organism>
<dbReference type="EMBL" id="L00975">
    <property type="protein sequence ID" value="AAA29324.1"/>
    <property type="molecule type" value="mRNA"/>
</dbReference>
<dbReference type="PIR" id="A45198">
    <property type="entry name" value="A45198"/>
</dbReference>
<dbReference type="SMR" id="P31420"/>
<dbReference type="OrthoDB" id="7452594at2759"/>
<dbReference type="Gene3D" id="2.130.10.10">
    <property type="entry name" value="YVTN repeat-like/Quinoprotein amine dehydrogenase"/>
    <property type="match status" value="1"/>
</dbReference>
<dbReference type="InterPro" id="IPR015943">
    <property type="entry name" value="WD40/YVTN_repeat-like_dom_sf"/>
</dbReference>
<dbReference type="SUPFAM" id="SSF63829">
    <property type="entry name" value="Calcium-dependent phosphotriesterase"/>
    <property type="match status" value="1"/>
</dbReference>
<accession>P31420</accession>